<sequence length="497" mass="55078">MSEAFLRFDGISVEFPGVKALDEVSFSARAGEVHALMGENGAGKSTLLKVLSGVNRPSSGQLWIDGQAHVFANAREALAHGIAIIYQELTLSPNLSVAENLLLGQLPERRGFIDRRTMKARAREILEELGEGDIDPATKVRELSIGQQQMIEIGRALLRDARIIAFDEPTSSLSVQETRQLKRIVARLRDEGRVVLYVTHRMEEVFEMCDAVTVFRDGRHIRTHETLEGLDHDMLVGEMVGRQIDDVYGFRPRDIGDVLMRIDGLQGRGVNEPVNLEVRRGEVLGLFGLVGAGRSELMRLVCGVEKASRGQVALRGETRVFASPHQAIRAGIAMCPEDRKSQGIFPVASVSDNLNISCRRFFRRWGMFRHAARETDNAKTYIQRLSIKTPSHRTPINTLSGGNQQKVILGRWLAEEIDLFVMDEPTRGIDVGARRDIYALLYDLAEQGKGVIVISSDLAEVSSICDRIGVMRDGVLVDIVPREQATQARLLGLALPA</sequence>
<dbReference type="EC" id="7.5.2.12" evidence="1"/>
<dbReference type="EMBL" id="CP000285">
    <property type="protein sequence ID" value="ABE58377.1"/>
    <property type="molecule type" value="Genomic_DNA"/>
</dbReference>
<dbReference type="RefSeq" id="WP_011506323.1">
    <property type="nucleotide sequence ID" value="NC_007963.1"/>
</dbReference>
<dbReference type="SMR" id="Q1QYT1"/>
<dbReference type="STRING" id="290398.Csal_1020"/>
<dbReference type="DNASU" id="4027866"/>
<dbReference type="GeneID" id="95333775"/>
<dbReference type="KEGG" id="csa:Csal_1020"/>
<dbReference type="eggNOG" id="COG1129">
    <property type="taxonomic scope" value="Bacteria"/>
</dbReference>
<dbReference type="HOGENOM" id="CLU_000604_92_0_6"/>
<dbReference type="OrthoDB" id="9776369at2"/>
<dbReference type="Proteomes" id="UP000000239">
    <property type="component" value="Chromosome"/>
</dbReference>
<dbReference type="GO" id="GO:0005886">
    <property type="term" value="C:plasma membrane"/>
    <property type="evidence" value="ECO:0007669"/>
    <property type="project" value="UniProtKB-SubCell"/>
</dbReference>
<dbReference type="GO" id="GO:0015612">
    <property type="term" value="F:ABC-type L-arabinose transporter activity"/>
    <property type="evidence" value="ECO:0007669"/>
    <property type="project" value="UniProtKB-EC"/>
</dbReference>
<dbReference type="GO" id="GO:0005524">
    <property type="term" value="F:ATP binding"/>
    <property type="evidence" value="ECO:0007669"/>
    <property type="project" value="UniProtKB-KW"/>
</dbReference>
<dbReference type="GO" id="GO:0016887">
    <property type="term" value="F:ATP hydrolysis activity"/>
    <property type="evidence" value="ECO:0007669"/>
    <property type="project" value="InterPro"/>
</dbReference>
<dbReference type="CDD" id="cd03216">
    <property type="entry name" value="ABC_Carb_Monos_I"/>
    <property type="match status" value="1"/>
</dbReference>
<dbReference type="CDD" id="cd03215">
    <property type="entry name" value="ABC_Carb_Monos_II"/>
    <property type="match status" value="1"/>
</dbReference>
<dbReference type="FunFam" id="3.40.50.300:FF:000127">
    <property type="entry name" value="Ribose import ATP-binding protein RbsA"/>
    <property type="match status" value="1"/>
</dbReference>
<dbReference type="Gene3D" id="3.40.50.300">
    <property type="entry name" value="P-loop containing nucleotide triphosphate hydrolases"/>
    <property type="match status" value="2"/>
</dbReference>
<dbReference type="InterPro" id="IPR003593">
    <property type="entry name" value="AAA+_ATPase"/>
</dbReference>
<dbReference type="InterPro" id="IPR050107">
    <property type="entry name" value="ABC_carbohydrate_import_ATPase"/>
</dbReference>
<dbReference type="InterPro" id="IPR003439">
    <property type="entry name" value="ABC_transporter-like_ATP-bd"/>
</dbReference>
<dbReference type="InterPro" id="IPR017871">
    <property type="entry name" value="ABC_transporter-like_CS"/>
</dbReference>
<dbReference type="InterPro" id="IPR027417">
    <property type="entry name" value="P-loop_NTPase"/>
</dbReference>
<dbReference type="NCBIfam" id="NF008442">
    <property type="entry name" value="PRK11288.1"/>
    <property type="match status" value="1"/>
</dbReference>
<dbReference type="PANTHER" id="PTHR43790:SF6">
    <property type="entry name" value="ARABINOSE IMPORT ATP-BINDING PROTEIN ARAG"/>
    <property type="match status" value="1"/>
</dbReference>
<dbReference type="PANTHER" id="PTHR43790">
    <property type="entry name" value="CARBOHYDRATE TRANSPORT ATP-BINDING PROTEIN MG119-RELATED"/>
    <property type="match status" value="1"/>
</dbReference>
<dbReference type="Pfam" id="PF00005">
    <property type="entry name" value="ABC_tran"/>
    <property type="match status" value="2"/>
</dbReference>
<dbReference type="SMART" id="SM00382">
    <property type="entry name" value="AAA"/>
    <property type="match status" value="2"/>
</dbReference>
<dbReference type="SUPFAM" id="SSF52540">
    <property type="entry name" value="P-loop containing nucleoside triphosphate hydrolases"/>
    <property type="match status" value="2"/>
</dbReference>
<dbReference type="PROSITE" id="PS00211">
    <property type="entry name" value="ABC_TRANSPORTER_1"/>
    <property type="match status" value="1"/>
</dbReference>
<dbReference type="PROSITE" id="PS50893">
    <property type="entry name" value="ABC_TRANSPORTER_2"/>
    <property type="match status" value="2"/>
</dbReference>
<dbReference type="PROSITE" id="PS51268">
    <property type="entry name" value="ARAG"/>
    <property type="match status" value="1"/>
</dbReference>
<protein>
    <recommendedName>
        <fullName evidence="1">Arabinose import ATP-binding protein AraG</fullName>
        <ecNumber evidence="1">7.5.2.12</ecNumber>
    </recommendedName>
</protein>
<gene>
    <name evidence="1" type="primary">araG</name>
    <name type="ordered locus">Csal_1020</name>
</gene>
<reference key="1">
    <citation type="journal article" date="2011" name="Stand. Genomic Sci.">
        <title>Complete genome sequence of the halophilic and highly halotolerant Chromohalobacter salexigens type strain (1H11(T)).</title>
        <authorList>
            <person name="Copeland A."/>
            <person name="O'Connor K."/>
            <person name="Lucas S."/>
            <person name="Lapidus A."/>
            <person name="Berry K.W."/>
            <person name="Detter J.C."/>
            <person name="Del Rio T.G."/>
            <person name="Hammon N."/>
            <person name="Dalin E."/>
            <person name="Tice H."/>
            <person name="Pitluck S."/>
            <person name="Bruce D."/>
            <person name="Goodwin L."/>
            <person name="Han C."/>
            <person name="Tapia R."/>
            <person name="Saunders E."/>
            <person name="Schmutz J."/>
            <person name="Brettin T."/>
            <person name="Larimer F."/>
            <person name="Land M."/>
            <person name="Hauser L."/>
            <person name="Vargas C."/>
            <person name="Nieto J.J."/>
            <person name="Kyrpides N.C."/>
            <person name="Ivanova N."/>
            <person name="Goker M."/>
            <person name="Klenk H.P."/>
            <person name="Csonka L.N."/>
            <person name="Woyke T."/>
        </authorList>
    </citation>
    <scope>NUCLEOTIDE SEQUENCE [LARGE SCALE GENOMIC DNA]</scope>
    <source>
        <strain>ATCC BAA-138 / DSM 3043 / CIP 106854 / NCIMB 13768 / 1H11</strain>
    </source>
</reference>
<keyword id="KW-0067">ATP-binding</keyword>
<keyword id="KW-0997">Cell inner membrane</keyword>
<keyword id="KW-1003">Cell membrane</keyword>
<keyword id="KW-0472">Membrane</keyword>
<keyword id="KW-0547">Nucleotide-binding</keyword>
<keyword id="KW-1185">Reference proteome</keyword>
<keyword id="KW-0677">Repeat</keyword>
<keyword id="KW-0762">Sugar transport</keyword>
<keyword id="KW-1278">Translocase</keyword>
<keyword id="KW-0813">Transport</keyword>
<proteinExistence type="inferred from homology"/>
<organism>
    <name type="scientific">Chromohalobacter salexigens (strain ATCC BAA-138 / DSM 3043 / CIP 106854 / NCIMB 13768 / 1H11)</name>
    <dbReference type="NCBI Taxonomy" id="290398"/>
    <lineage>
        <taxon>Bacteria</taxon>
        <taxon>Pseudomonadati</taxon>
        <taxon>Pseudomonadota</taxon>
        <taxon>Gammaproteobacteria</taxon>
        <taxon>Oceanospirillales</taxon>
        <taxon>Halomonadaceae</taxon>
        <taxon>Chromohalobacter</taxon>
    </lineage>
</organism>
<accession>Q1QYT1</accession>
<comment type="function">
    <text evidence="1">Part of the ABC transporter complex AraFGH involved in arabinose import. Responsible for energy coupling to the transport system.</text>
</comment>
<comment type="catalytic activity">
    <reaction evidence="1">
        <text>L-arabinose(out) + ATP + H2O = L-arabinose(in) + ADP + phosphate + H(+)</text>
        <dbReference type="Rhea" id="RHEA:30007"/>
        <dbReference type="ChEBI" id="CHEBI:15377"/>
        <dbReference type="ChEBI" id="CHEBI:15378"/>
        <dbReference type="ChEBI" id="CHEBI:17535"/>
        <dbReference type="ChEBI" id="CHEBI:30616"/>
        <dbReference type="ChEBI" id="CHEBI:43474"/>
        <dbReference type="ChEBI" id="CHEBI:456216"/>
        <dbReference type="EC" id="7.5.2.12"/>
    </reaction>
</comment>
<comment type="subunit">
    <text evidence="1">The complex is composed of two ATP-binding proteins (AraG), two transmembrane proteins (AraH) and a solute-binding protein (AraF).</text>
</comment>
<comment type="subcellular location">
    <subcellularLocation>
        <location evidence="1">Cell inner membrane</location>
        <topology evidence="1">Peripheral membrane protein</topology>
    </subcellularLocation>
</comment>
<comment type="similarity">
    <text evidence="1">Belongs to the ABC transporter superfamily. Arabinose importer (TC 3.A.1.2.2) family.</text>
</comment>
<name>ARAG_CHRSD</name>
<evidence type="ECO:0000255" key="1">
    <source>
        <dbReference type="HAMAP-Rule" id="MF_01721"/>
    </source>
</evidence>
<feature type="chain" id="PRO_0000270465" description="Arabinose import ATP-binding protein AraG">
    <location>
        <begin position="1"/>
        <end position="497"/>
    </location>
</feature>
<feature type="domain" description="ABC transporter 1" evidence="1">
    <location>
        <begin position="6"/>
        <end position="242"/>
    </location>
</feature>
<feature type="domain" description="ABC transporter 2" evidence="1">
    <location>
        <begin position="250"/>
        <end position="497"/>
    </location>
</feature>
<feature type="binding site" evidence="1">
    <location>
        <begin position="38"/>
        <end position="45"/>
    </location>
    <ligand>
        <name>ATP</name>
        <dbReference type="ChEBI" id="CHEBI:30616"/>
    </ligand>
</feature>